<name>NU4C_STAPU</name>
<protein>
    <recommendedName>
        <fullName evidence="1">NAD(P)H-quinone oxidoreductase chain 4, chloroplastic</fullName>
        <ecNumber evidence="1">7.1.1.-</ecNumber>
    </recommendedName>
    <alternativeName>
        <fullName evidence="1">NAD(P)H dehydrogenase, chain 4</fullName>
    </alternativeName>
    <alternativeName>
        <fullName evidence="1">NADH-plastoquinone oxidoreductase chain 4</fullName>
    </alternativeName>
</protein>
<dbReference type="EC" id="7.1.1.-" evidence="1"/>
<dbReference type="EMBL" id="AY958085">
    <property type="protein sequence ID" value="AAX45700.1"/>
    <property type="molecule type" value="Genomic_DNA"/>
</dbReference>
<dbReference type="RefSeq" id="YP_636368.1">
    <property type="nucleotide sequence ID" value="NC_008116.1"/>
</dbReference>
<dbReference type="SMR" id="Q32S08"/>
<dbReference type="GeneID" id="4108671"/>
<dbReference type="GO" id="GO:0009535">
    <property type="term" value="C:chloroplast thylakoid membrane"/>
    <property type="evidence" value="ECO:0007669"/>
    <property type="project" value="UniProtKB-SubCell"/>
</dbReference>
<dbReference type="GO" id="GO:0008137">
    <property type="term" value="F:NADH dehydrogenase (ubiquinone) activity"/>
    <property type="evidence" value="ECO:0007669"/>
    <property type="project" value="InterPro"/>
</dbReference>
<dbReference type="GO" id="GO:0048039">
    <property type="term" value="F:ubiquinone binding"/>
    <property type="evidence" value="ECO:0007669"/>
    <property type="project" value="TreeGrafter"/>
</dbReference>
<dbReference type="GO" id="GO:0042773">
    <property type="term" value="P:ATP synthesis coupled electron transport"/>
    <property type="evidence" value="ECO:0007669"/>
    <property type="project" value="InterPro"/>
</dbReference>
<dbReference type="GO" id="GO:0015990">
    <property type="term" value="P:electron transport coupled proton transport"/>
    <property type="evidence" value="ECO:0007669"/>
    <property type="project" value="TreeGrafter"/>
</dbReference>
<dbReference type="HAMAP" id="MF_00491">
    <property type="entry name" value="NDH1_NuoM"/>
    <property type="match status" value="1"/>
</dbReference>
<dbReference type="InterPro" id="IPR022997">
    <property type="entry name" value="NADH_Q_OxRdtase_chain4"/>
</dbReference>
<dbReference type="InterPro" id="IPR010227">
    <property type="entry name" value="NADH_Q_OxRdtase_chainM/4"/>
</dbReference>
<dbReference type="InterPro" id="IPR003918">
    <property type="entry name" value="NADH_UbQ_OxRdtase"/>
</dbReference>
<dbReference type="InterPro" id="IPR001750">
    <property type="entry name" value="ND/Mrp_TM"/>
</dbReference>
<dbReference type="NCBIfam" id="TIGR01972">
    <property type="entry name" value="NDH_I_M"/>
    <property type="match status" value="1"/>
</dbReference>
<dbReference type="NCBIfam" id="NF009212">
    <property type="entry name" value="PRK12561.1"/>
    <property type="match status" value="1"/>
</dbReference>
<dbReference type="PANTHER" id="PTHR43507:SF21">
    <property type="entry name" value="NAD(P)H-QUINONE OXIDOREDUCTASE CHAIN 4, CHLOROPLASTIC"/>
    <property type="match status" value="1"/>
</dbReference>
<dbReference type="PANTHER" id="PTHR43507">
    <property type="entry name" value="NADH-UBIQUINONE OXIDOREDUCTASE CHAIN 4"/>
    <property type="match status" value="1"/>
</dbReference>
<dbReference type="Pfam" id="PF00361">
    <property type="entry name" value="Proton_antipo_M"/>
    <property type="match status" value="1"/>
</dbReference>
<dbReference type="PRINTS" id="PR01437">
    <property type="entry name" value="NUOXDRDTASE4"/>
</dbReference>
<keyword id="KW-0150">Chloroplast</keyword>
<keyword id="KW-0472">Membrane</keyword>
<keyword id="KW-0520">NAD</keyword>
<keyword id="KW-0521">NADP</keyword>
<keyword id="KW-0934">Plastid</keyword>
<keyword id="KW-0618">Plastoquinone</keyword>
<keyword id="KW-0874">Quinone</keyword>
<keyword id="KW-0793">Thylakoid</keyword>
<keyword id="KW-1278">Translocase</keyword>
<keyword id="KW-0812">Transmembrane</keyword>
<keyword id="KW-1133">Transmembrane helix</keyword>
<organism>
    <name type="scientific">Staurastrum punctulatum</name>
    <name type="common">Green alga</name>
    <name type="synonym">Cosmoastrum punctulatum</name>
    <dbReference type="NCBI Taxonomy" id="102822"/>
    <lineage>
        <taxon>Eukaryota</taxon>
        <taxon>Viridiplantae</taxon>
        <taxon>Streptophyta</taxon>
        <taxon>Zygnematophyceae</taxon>
        <taxon>Zygnematophycidae</taxon>
        <taxon>Desmidiales</taxon>
        <taxon>Desmidiaceae</taxon>
        <taxon>Staurastrum</taxon>
    </lineage>
</organism>
<sequence length="524" mass="58090">MNNYPWLTIITLFPISAGLLIPLIPNRGNNLIRWYALGICLIDFLLMTYVFGSQFDFYGQGIQLKEDISWINVIDFHWRVGVDGLSIALVLLTGFITTLATLAAWPVTRNPRLFYFLMLAMYSGQLGLFLAQDLLLFFFMWELELIPVYLLLSMWGGRRRLYAATKFILYTAGGSIFLLAAILTISLWGPNGPILDMETLSKQSYPLGLEILVYLGFLIAYAVKLPVFPFHTWLPDTHGEAHYSTCMLLAGILLKMGGYGFIRINIEMLSDAHRIFAPWLVALGAGQIVYAALVSIAQKNLKRRIAYSSVSHMGFVLIGAGSFSDLGLSGAILQMISHGLIGAGLFFLAGTTYDRSRTLILDDMGGWGSPLPKTFSTFTACAMASLALPGMSGFVAELMIFLGIVASSVYSPLFKAIITCVEGIGIILTPIYLLSMVRKMFYGYNDISLKTLKDSLILDASPREVFIILSLLVPMLGIGFYPDLTLQLWNQKAQEIVSLPSGNEKSLTLISYSYPVEKNFSLHH</sequence>
<accession>Q32S08</accession>
<evidence type="ECO:0000255" key="1">
    <source>
        <dbReference type="HAMAP-Rule" id="MF_00491"/>
    </source>
</evidence>
<reference key="1">
    <citation type="journal article" date="2005" name="BMC Biol.">
        <title>The complete chloroplast DNA sequences of the charophycean green algae Staurastrum and Zygnema reveal that the chloroplast genome underwent extensive changes during the evolution of the Zygnematales.</title>
        <authorList>
            <person name="Turmel M."/>
            <person name="Otis C."/>
            <person name="Lemieux C."/>
        </authorList>
    </citation>
    <scope>NUCLEOTIDE SEQUENCE [LARGE SCALE GENOMIC DNA]</scope>
</reference>
<proteinExistence type="inferred from homology"/>
<feature type="chain" id="PRO_0000275923" description="NAD(P)H-quinone oxidoreductase chain 4, chloroplastic">
    <location>
        <begin position="1"/>
        <end position="524"/>
    </location>
</feature>
<feature type="transmembrane region" description="Helical" evidence="1">
    <location>
        <begin position="4"/>
        <end position="24"/>
    </location>
</feature>
<feature type="transmembrane region" description="Helical" evidence="1">
    <location>
        <begin position="31"/>
        <end position="51"/>
    </location>
</feature>
<feature type="transmembrane region" description="Helical" evidence="1">
    <location>
        <begin position="87"/>
        <end position="107"/>
    </location>
</feature>
<feature type="transmembrane region" description="Helical" evidence="1">
    <location>
        <begin position="113"/>
        <end position="133"/>
    </location>
</feature>
<feature type="transmembrane region" description="Helical" evidence="1">
    <location>
        <begin position="134"/>
        <end position="154"/>
    </location>
</feature>
<feature type="transmembrane region" description="Helical" evidence="1">
    <location>
        <begin position="167"/>
        <end position="187"/>
    </location>
</feature>
<feature type="transmembrane region" description="Helical" evidence="1">
    <location>
        <begin position="211"/>
        <end position="231"/>
    </location>
</feature>
<feature type="transmembrane region" description="Helical" evidence="1">
    <location>
        <begin position="242"/>
        <end position="262"/>
    </location>
</feature>
<feature type="transmembrane region" description="Helical" evidence="1">
    <location>
        <begin position="275"/>
        <end position="295"/>
    </location>
</feature>
<feature type="transmembrane region" description="Helical" evidence="1">
    <location>
        <begin position="308"/>
        <end position="328"/>
    </location>
</feature>
<feature type="transmembrane region" description="Helical" evidence="1">
    <location>
        <begin position="330"/>
        <end position="350"/>
    </location>
</feature>
<feature type="transmembrane region" description="Helical" evidence="1">
    <location>
        <begin position="386"/>
        <end position="406"/>
    </location>
</feature>
<feature type="transmembrane region" description="Helical" evidence="1">
    <location>
        <begin position="417"/>
        <end position="437"/>
    </location>
</feature>
<feature type="transmembrane region" description="Helical" evidence="1">
    <location>
        <begin position="465"/>
        <end position="485"/>
    </location>
</feature>
<comment type="catalytic activity">
    <reaction evidence="1">
        <text>a plastoquinone + NADH + (n+1) H(+)(in) = a plastoquinol + NAD(+) + n H(+)(out)</text>
        <dbReference type="Rhea" id="RHEA:42608"/>
        <dbReference type="Rhea" id="RHEA-COMP:9561"/>
        <dbReference type="Rhea" id="RHEA-COMP:9562"/>
        <dbReference type="ChEBI" id="CHEBI:15378"/>
        <dbReference type="ChEBI" id="CHEBI:17757"/>
        <dbReference type="ChEBI" id="CHEBI:57540"/>
        <dbReference type="ChEBI" id="CHEBI:57945"/>
        <dbReference type="ChEBI" id="CHEBI:62192"/>
    </reaction>
</comment>
<comment type="catalytic activity">
    <reaction evidence="1">
        <text>a plastoquinone + NADPH + (n+1) H(+)(in) = a plastoquinol + NADP(+) + n H(+)(out)</text>
        <dbReference type="Rhea" id="RHEA:42612"/>
        <dbReference type="Rhea" id="RHEA-COMP:9561"/>
        <dbReference type="Rhea" id="RHEA-COMP:9562"/>
        <dbReference type="ChEBI" id="CHEBI:15378"/>
        <dbReference type="ChEBI" id="CHEBI:17757"/>
        <dbReference type="ChEBI" id="CHEBI:57783"/>
        <dbReference type="ChEBI" id="CHEBI:58349"/>
        <dbReference type="ChEBI" id="CHEBI:62192"/>
    </reaction>
</comment>
<comment type="subcellular location">
    <subcellularLocation>
        <location evidence="1">Plastid</location>
        <location evidence="1">Chloroplast thylakoid membrane</location>
        <topology evidence="1">Multi-pass membrane protein</topology>
    </subcellularLocation>
</comment>
<comment type="similarity">
    <text evidence="1">Belongs to the complex I subunit 4 family.</text>
</comment>
<gene>
    <name evidence="1" type="primary">ndhD</name>
</gene>
<geneLocation type="chloroplast"/>